<reference key="1">
    <citation type="journal article" date="2005" name="BMC Genomics">
        <title>Characterization of 954 bovine full-CDS cDNA sequences.</title>
        <authorList>
            <person name="Harhay G.P."/>
            <person name="Sonstegard T.S."/>
            <person name="Keele J.W."/>
            <person name="Heaton M.P."/>
            <person name="Clawson M.L."/>
            <person name="Snelling W.M."/>
            <person name="Wiedmann R.T."/>
            <person name="Van Tassell C.P."/>
            <person name="Smith T.P.L."/>
        </authorList>
    </citation>
    <scope>NUCLEOTIDE SEQUENCE [LARGE SCALE MRNA]</scope>
</reference>
<reference key="2">
    <citation type="submission" date="2005-08" db="EMBL/GenBank/DDBJ databases">
        <authorList>
            <consortium name="NIH - Mammalian Gene Collection (MGC) project"/>
        </authorList>
    </citation>
    <scope>NUCLEOTIDE SEQUENCE [LARGE SCALE MRNA]</scope>
    <source>
        <strain>Hereford</strain>
        <tissue>Kidney</tissue>
    </source>
</reference>
<evidence type="ECO:0000250" key="1">
    <source>
        <dbReference type="UniProtKB" id="P41567"/>
    </source>
</evidence>
<evidence type="ECO:0000305" key="2"/>
<sequence length="113" mass="12732">MSAIQNLHSFDPFADASKGDDLLPAGTEDYIHIRIQQRNGRKTLTTVQGIADDYDKKKLVKAFKKKFACNGTVIEHPEYGEVIQLQGDQRKNICQFLVEIGLAKDDQLKVHGF</sequence>
<dbReference type="EMBL" id="BT021082">
    <property type="protein sequence ID" value="AAX09099.1"/>
    <property type="molecule type" value="mRNA"/>
</dbReference>
<dbReference type="EMBL" id="BC103170">
    <property type="protein sequence ID" value="AAI03171.1"/>
    <property type="molecule type" value="mRNA"/>
</dbReference>
<dbReference type="RefSeq" id="NP_001014884.1">
    <property type="nucleotide sequence ID" value="NM_001014884.1"/>
</dbReference>
<dbReference type="BMRB" id="Q5E938"/>
<dbReference type="SMR" id="Q5E938"/>
<dbReference type="FunCoup" id="Q5E938">
    <property type="interactions" value="2799"/>
</dbReference>
<dbReference type="STRING" id="9913.ENSBTAP00000002948"/>
<dbReference type="PaxDb" id="9913-ENSBTAP00000002948"/>
<dbReference type="PeptideAtlas" id="Q5E938"/>
<dbReference type="Ensembl" id="ENSBTAT00000002948.2">
    <property type="protein sequence ID" value="ENSBTAP00000002948.1"/>
    <property type="gene ID" value="ENSBTAG00000002282.2"/>
</dbReference>
<dbReference type="GeneID" id="509764"/>
<dbReference type="KEGG" id="bta:509764"/>
<dbReference type="CTD" id="10209"/>
<dbReference type="VEuPathDB" id="HostDB:ENSBTAG00000002282"/>
<dbReference type="VGNC" id="VGNC:57141">
    <property type="gene designation" value="EIF1"/>
</dbReference>
<dbReference type="eggNOG" id="KOG1770">
    <property type="taxonomic scope" value="Eukaryota"/>
</dbReference>
<dbReference type="GeneTree" id="ENSGT00390000015789"/>
<dbReference type="HOGENOM" id="CLU_082805_3_0_1"/>
<dbReference type="InParanoid" id="Q5E938"/>
<dbReference type="OMA" id="VENHIHI"/>
<dbReference type="OrthoDB" id="10248435at2759"/>
<dbReference type="TreeFam" id="TF314417"/>
<dbReference type="Proteomes" id="UP000009136">
    <property type="component" value="Chromosome 19"/>
</dbReference>
<dbReference type="Bgee" id="ENSBTAG00000002282">
    <property type="expression patterns" value="Expressed in corpus luteum and 103 other cell types or tissues"/>
</dbReference>
<dbReference type="GO" id="GO:0016282">
    <property type="term" value="C:eukaryotic 43S preinitiation complex"/>
    <property type="evidence" value="ECO:0000318"/>
    <property type="project" value="GO_Central"/>
</dbReference>
<dbReference type="GO" id="GO:0033290">
    <property type="term" value="C:eukaryotic 48S preinitiation complex"/>
    <property type="evidence" value="ECO:0007669"/>
    <property type="project" value="Ensembl"/>
</dbReference>
<dbReference type="GO" id="GO:0043614">
    <property type="term" value="C:multi-eIF complex"/>
    <property type="evidence" value="ECO:0007669"/>
    <property type="project" value="Ensembl"/>
</dbReference>
<dbReference type="GO" id="GO:0005634">
    <property type="term" value="C:nucleus"/>
    <property type="evidence" value="ECO:0007669"/>
    <property type="project" value="Ensembl"/>
</dbReference>
<dbReference type="GO" id="GO:0043024">
    <property type="term" value="F:ribosomal small subunit binding"/>
    <property type="evidence" value="ECO:0000318"/>
    <property type="project" value="GO_Central"/>
</dbReference>
<dbReference type="GO" id="GO:0003723">
    <property type="term" value="F:RNA binding"/>
    <property type="evidence" value="ECO:0000318"/>
    <property type="project" value="GO_Central"/>
</dbReference>
<dbReference type="GO" id="GO:0003743">
    <property type="term" value="F:translation initiation factor activity"/>
    <property type="evidence" value="ECO:0000318"/>
    <property type="project" value="GO_Central"/>
</dbReference>
<dbReference type="GO" id="GO:0006446">
    <property type="term" value="P:regulation of translational initiation"/>
    <property type="evidence" value="ECO:0007669"/>
    <property type="project" value="Ensembl"/>
</dbReference>
<dbReference type="CDD" id="cd11566">
    <property type="entry name" value="eIF1_SUI1"/>
    <property type="match status" value="1"/>
</dbReference>
<dbReference type="FunFam" id="3.30.780.10:FF:000003">
    <property type="entry name" value="Eukaryotic translation initiation factor 1b"/>
    <property type="match status" value="1"/>
</dbReference>
<dbReference type="Gene3D" id="3.30.780.10">
    <property type="entry name" value="SUI1-like domain"/>
    <property type="match status" value="1"/>
</dbReference>
<dbReference type="InterPro" id="IPR001950">
    <property type="entry name" value="SUI1"/>
</dbReference>
<dbReference type="InterPro" id="IPR036877">
    <property type="entry name" value="SUI1_dom_sf"/>
</dbReference>
<dbReference type="InterPro" id="IPR005874">
    <property type="entry name" value="SUI1_euk"/>
</dbReference>
<dbReference type="NCBIfam" id="TIGR01160">
    <property type="entry name" value="SUI1_MOF2"/>
    <property type="match status" value="1"/>
</dbReference>
<dbReference type="PANTHER" id="PTHR10388">
    <property type="entry name" value="EUKARYOTIC TRANSLATION INITIATION FACTOR SUI1"/>
    <property type="match status" value="1"/>
</dbReference>
<dbReference type="Pfam" id="PF01253">
    <property type="entry name" value="SUI1"/>
    <property type="match status" value="1"/>
</dbReference>
<dbReference type="PIRSF" id="PIRSF004499">
    <property type="entry name" value="SUI1_euk"/>
    <property type="match status" value="1"/>
</dbReference>
<dbReference type="SUPFAM" id="SSF55159">
    <property type="entry name" value="eIF1-like"/>
    <property type="match status" value="1"/>
</dbReference>
<dbReference type="PROSITE" id="PS50296">
    <property type="entry name" value="SUI1"/>
    <property type="match status" value="1"/>
</dbReference>
<organism>
    <name type="scientific">Bos taurus</name>
    <name type="common">Bovine</name>
    <dbReference type="NCBI Taxonomy" id="9913"/>
    <lineage>
        <taxon>Eukaryota</taxon>
        <taxon>Metazoa</taxon>
        <taxon>Chordata</taxon>
        <taxon>Craniata</taxon>
        <taxon>Vertebrata</taxon>
        <taxon>Euteleostomi</taxon>
        <taxon>Mammalia</taxon>
        <taxon>Eutheria</taxon>
        <taxon>Laurasiatheria</taxon>
        <taxon>Artiodactyla</taxon>
        <taxon>Ruminantia</taxon>
        <taxon>Pecora</taxon>
        <taxon>Bovidae</taxon>
        <taxon>Bovinae</taxon>
        <taxon>Bos</taxon>
    </lineage>
</organism>
<gene>
    <name type="primary">EIF1</name>
    <name type="synonym">SUI1</name>
</gene>
<accession>Q5E938</accession>
<protein>
    <recommendedName>
        <fullName>Eukaryotic translation initiation factor 1</fullName>
        <shortName>eIF1</shortName>
    </recommendedName>
    <alternativeName>
        <fullName>Protein translation factor SUI1 homolog</fullName>
    </alternativeName>
</protein>
<proteinExistence type="inferred from homology"/>
<feature type="initiator methionine" description="Removed" evidence="1">
    <location>
        <position position="1"/>
    </location>
</feature>
<feature type="chain" id="PRO_0000130553" description="Eukaryotic translation initiation factor 1">
    <location>
        <begin position="2"/>
        <end position="113"/>
    </location>
</feature>
<feature type="site" description="Binds 40S ribosomal subunit" evidence="1">
    <location>
        <position position="41"/>
    </location>
</feature>
<feature type="site" description="Binds 40S ribosomal subunit" evidence="1">
    <location>
        <position position="65"/>
    </location>
</feature>
<feature type="modified residue" description="N-acetylserine" evidence="1">
    <location>
        <position position="2"/>
    </location>
</feature>
<feature type="modified residue" description="Phosphoserine" evidence="1">
    <location>
        <position position="2"/>
    </location>
</feature>
<feature type="modified residue" description="Phosphoserine" evidence="1">
    <location>
        <position position="9"/>
    </location>
</feature>
<comment type="function">
    <text evidence="1">Component of the 43S pre-initiation complex (43S PIC), which binds to the mRNA cap-proximal region, scans mRNA 5'-untranslated region, and locates the initiation codon. Together with eIF1A (EIF1AX), EIF1 facilitates scanning and is essential for start codon recognition on the basis of AUG nucleotide context and location relative to the 5'-cap. Participates to initiation codon selection by influencing the conformation of the 40S ribosomal subunit and the positions of bound mRNA and initiator tRNA; this is possible after its binding to the interface surface of the platform of the 40S ribosomal subunit close to the P-site. Together with eIF1A (EIF1AX), also regulates the opening and closing of the mRNA binding channel, which ensures mRNA recruitment, scanning and the fidelity of initiation codon selection. Continuously monitors and protects against premature and partial base-pairing of codons in the 5'-UTR with the anticodon of initiator tRNA. Together with eIF1A (EIF1AX), acts for ribosomal scanning, promotion of the assembly of 48S complex at the initiation codon (43S PIC becomes 48S PIC after the start codon is reached), and dissociation of aberrant complexes. Interacts with EIF4G1, which in a mutual exclusive interaction associates either with EIF1 or with EIF4E on a common binding site. EIF4G1-EIF1 complex promotes ribosome scanning (on both short and long 5'UTR), leaky scanning (on short 5'UTR) which is the bypass of the initial start codon, and discrimination against cap-proximal AUG. Is probably maintained within the 43S PIC in open conformation thanks to EIF1A-EIF5 interaction. Once the correct start codon is reached, EIF1 is physically excluded from the decoding site, shifting the PIC into the closed conformation and arresting it at the start codon.</text>
</comment>
<comment type="subunit">
    <text evidence="1">Component of the 43S pre-initiation complex (43S PIC), which is composed of the 40S ribosomal subunit, EIF1, eIF1A (EIF1AX), eIF3 complex, EIF5 and eIF2-GTP-initiator tRNA complex (eIF2 ternary complex). Interacts with EIF4G1; in specific 5'-UTR length and AUG context. Interacts with EIF5; which in a mutual exclusive interaction associates either with EIF1 or with EIF2S2 on a common binding site. Interacts with RENT2.</text>
</comment>
<comment type="subcellular location">
    <subcellularLocation>
        <location evidence="1">Cytoplasm</location>
    </subcellularLocation>
</comment>
<comment type="similarity">
    <text evidence="2">Belongs to the SUI1 family.</text>
</comment>
<name>EIF1_BOVIN</name>
<keyword id="KW-0007">Acetylation</keyword>
<keyword id="KW-0963">Cytoplasm</keyword>
<keyword id="KW-0396">Initiation factor</keyword>
<keyword id="KW-0597">Phosphoprotein</keyword>
<keyword id="KW-0648">Protein biosynthesis</keyword>
<keyword id="KW-1185">Reference proteome</keyword>